<protein>
    <recommendedName>
        <fullName>Protein SP1</fullName>
    </recommendedName>
</protein>
<accession>P84580</accession>
<dbReference type="Proteomes" id="UP000694918">
    <property type="component" value="Unplaced"/>
</dbReference>
<sequence>IINDFTNLVNQVEPLK</sequence>
<reference key="1">
    <citation type="journal article" date="2006" name="Ann. Bot.">
        <title>Proteome profiling of Populus euphratica Oliv. upon heat stress.</title>
        <authorList>
            <person name="Ferreira S."/>
            <person name="Hjernoe K."/>
            <person name="Larsen M."/>
            <person name="Wingsle G."/>
            <person name="Larsen P."/>
            <person name="Fey S."/>
            <person name="Roepstorff P."/>
            <person name="Pais M.S."/>
        </authorList>
    </citation>
    <scope>PROTEIN SEQUENCE</scope>
    <source>
        <tissue>Leaf</tissue>
    </source>
</reference>
<organism>
    <name type="scientific">Populus euphratica</name>
    <name type="common">Euphrates poplar</name>
    <dbReference type="NCBI Taxonomy" id="75702"/>
    <lineage>
        <taxon>Eukaryota</taxon>
        <taxon>Viridiplantae</taxon>
        <taxon>Streptophyta</taxon>
        <taxon>Embryophyta</taxon>
        <taxon>Tracheophyta</taxon>
        <taxon>Spermatophyta</taxon>
        <taxon>Magnoliopsida</taxon>
        <taxon>eudicotyledons</taxon>
        <taxon>Gunneridae</taxon>
        <taxon>Pentapetalae</taxon>
        <taxon>rosids</taxon>
        <taxon>fabids</taxon>
        <taxon>Malpighiales</taxon>
        <taxon>Salicaceae</taxon>
        <taxon>Saliceae</taxon>
        <taxon>Populus</taxon>
    </lineage>
</organism>
<proteinExistence type="evidence at protein level"/>
<keyword id="KW-0903">Direct protein sequencing</keyword>
<keyword id="KW-1185">Reference proteome</keyword>
<name>SP1_POPEU</name>
<feature type="chain" id="PRO_0000072055" description="Protein SP1">
    <location>
        <begin position="1" status="less than"/>
        <end position="16" status="greater than"/>
    </location>
</feature>
<feature type="non-terminal residue">
    <location>
        <position position="1"/>
    </location>
</feature>
<feature type="non-terminal residue">
    <location>
        <position position="16"/>
    </location>
</feature>